<gene>
    <name type="primary">Fkbp11</name>
</gene>
<comment type="function">
    <text>PPIases accelerate the folding of proteins during protein synthesis.</text>
</comment>
<comment type="catalytic activity">
    <reaction>
        <text>[protein]-peptidylproline (omega=180) = [protein]-peptidylproline (omega=0)</text>
        <dbReference type="Rhea" id="RHEA:16237"/>
        <dbReference type="Rhea" id="RHEA-COMP:10747"/>
        <dbReference type="Rhea" id="RHEA-COMP:10748"/>
        <dbReference type="ChEBI" id="CHEBI:83833"/>
        <dbReference type="ChEBI" id="CHEBI:83834"/>
        <dbReference type="EC" id="5.2.1.8"/>
    </reaction>
</comment>
<comment type="subunit">
    <text evidence="3">Interacts with IFITM5.</text>
</comment>
<comment type="subcellular location">
    <subcellularLocation>
        <location evidence="4">Membrane</location>
        <topology evidence="4">Single-pass membrane protein</topology>
    </subcellularLocation>
</comment>
<comment type="similarity">
    <text evidence="4">Belongs to the FKBP-type PPIase family.</text>
</comment>
<feature type="signal peptide" evidence="1">
    <location>
        <begin position="1"/>
        <end position="27"/>
    </location>
</feature>
<feature type="chain" id="PRO_0000025520" description="Peptidyl-prolyl cis-trans isomerase FKBP11">
    <location>
        <begin position="28"/>
        <end position="201"/>
    </location>
</feature>
<feature type="transmembrane region" description="Helical" evidence="1">
    <location>
        <begin position="156"/>
        <end position="176"/>
    </location>
</feature>
<feature type="domain" description="PPIase FKBP-type" evidence="2">
    <location>
        <begin position="57"/>
        <end position="144"/>
    </location>
</feature>
<feature type="sequence conflict" description="In Ref. 1; BAB31559." evidence="4" ref="1">
    <original>S</original>
    <variation>F</variation>
    <location>
        <position position="53"/>
    </location>
</feature>
<feature type="sequence conflict" description="In Ref. 1; BAB31559." evidence="4" ref="1">
    <original>S</original>
    <variation>R</variation>
    <location>
        <position position="198"/>
    </location>
</feature>
<keyword id="KW-0413">Isomerase</keyword>
<keyword id="KW-0472">Membrane</keyword>
<keyword id="KW-1185">Reference proteome</keyword>
<keyword id="KW-0697">Rotamase</keyword>
<keyword id="KW-0732">Signal</keyword>
<keyword id="KW-0812">Transmembrane</keyword>
<keyword id="KW-1133">Transmembrane helix</keyword>
<proteinExistence type="evidence at protein level"/>
<dbReference type="EC" id="5.2.1.8"/>
<dbReference type="EMBL" id="AK003331">
    <property type="protein sequence ID" value="BAB22719.1"/>
    <property type="molecule type" value="mRNA"/>
</dbReference>
<dbReference type="EMBL" id="AK019132">
    <property type="protein sequence ID" value="BAB31559.1"/>
    <property type="molecule type" value="mRNA"/>
</dbReference>
<dbReference type="EMBL" id="BC037596">
    <property type="protein sequence ID" value="AAH37596.1"/>
    <property type="molecule type" value="mRNA"/>
</dbReference>
<dbReference type="CCDS" id="CCDS27803.1"/>
<dbReference type="RefSeq" id="NP_077131.2">
    <property type="nucleotide sequence ID" value="NM_024169.3"/>
</dbReference>
<dbReference type="SMR" id="Q9D1M7"/>
<dbReference type="BioGRID" id="211229">
    <property type="interactions" value="3"/>
</dbReference>
<dbReference type="FunCoup" id="Q9D1M7">
    <property type="interactions" value="270"/>
</dbReference>
<dbReference type="STRING" id="10090.ENSMUSP00000003445"/>
<dbReference type="GlyGen" id="Q9D1M7">
    <property type="glycosylation" value="1 site, 1 O-linked glycan (1 site)"/>
</dbReference>
<dbReference type="PhosphoSitePlus" id="Q9D1M7"/>
<dbReference type="SwissPalm" id="Q9D1M7"/>
<dbReference type="jPOST" id="Q9D1M7"/>
<dbReference type="PaxDb" id="10090-ENSMUSP00000003445"/>
<dbReference type="PeptideAtlas" id="Q9D1M7"/>
<dbReference type="ProteomicsDB" id="267591"/>
<dbReference type="Pumba" id="Q9D1M7"/>
<dbReference type="Antibodypedia" id="25734">
    <property type="antibodies" value="194 antibodies from 24 providers"/>
</dbReference>
<dbReference type="DNASU" id="66120"/>
<dbReference type="Ensembl" id="ENSMUST00000003445.8">
    <property type="protein sequence ID" value="ENSMUSP00000003445.7"/>
    <property type="gene ID" value="ENSMUSG00000003355.8"/>
</dbReference>
<dbReference type="GeneID" id="66120"/>
<dbReference type="KEGG" id="mmu:66120"/>
<dbReference type="UCSC" id="uc007xnm.1">
    <property type="organism name" value="mouse"/>
</dbReference>
<dbReference type="AGR" id="MGI:1913370"/>
<dbReference type="CTD" id="51303"/>
<dbReference type="MGI" id="MGI:1913370">
    <property type="gene designation" value="Fkbp11"/>
</dbReference>
<dbReference type="VEuPathDB" id="HostDB:ENSMUSG00000003355"/>
<dbReference type="eggNOG" id="KOG0549">
    <property type="taxonomic scope" value="Eukaryota"/>
</dbReference>
<dbReference type="GeneTree" id="ENSGT00940000159521"/>
<dbReference type="HOGENOM" id="CLU_013615_8_0_1"/>
<dbReference type="InParanoid" id="Q9D1M7"/>
<dbReference type="OMA" id="VFTCGLA"/>
<dbReference type="OrthoDB" id="1902587at2759"/>
<dbReference type="PhylomeDB" id="Q9D1M7"/>
<dbReference type="TreeFam" id="TF105296"/>
<dbReference type="BioGRID-ORCS" id="66120">
    <property type="hits" value="0 hits in 79 CRISPR screens"/>
</dbReference>
<dbReference type="ChiTaRS" id="Fkbp11">
    <property type="organism name" value="mouse"/>
</dbReference>
<dbReference type="PRO" id="PR:Q9D1M7"/>
<dbReference type="Proteomes" id="UP000000589">
    <property type="component" value="Chromosome 15"/>
</dbReference>
<dbReference type="RNAct" id="Q9D1M7">
    <property type="molecule type" value="protein"/>
</dbReference>
<dbReference type="Bgee" id="ENSMUSG00000003355">
    <property type="expression patterns" value="Expressed in parotid gland and 203 other cell types or tissues"/>
</dbReference>
<dbReference type="GO" id="GO:0016020">
    <property type="term" value="C:membrane"/>
    <property type="evidence" value="ECO:0007669"/>
    <property type="project" value="UniProtKB-SubCell"/>
</dbReference>
<dbReference type="GO" id="GO:0003755">
    <property type="term" value="F:peptidyl-prolyl cis-trans isomerase activity"/>
    <property type="evidence" value="ECO:0007669"/>
    <property type="project" value="UniProtKB-KW"/>
</dbReference>
<dbReference type="GO" id="GO:0061077">
    <property type="term" value="P:chaperone-mediated protein folding"/>
    <property type="evidence" value="ECO:0007669"/>
    <property type="project" value="InterPro"/>
</dbReference>
<dbReference type="FunFam" id="3.10.50.40:FF:000048">
    <property type="entry name" value="Peptidylprolyl isomerase"/>
    <property type="match status" value="1"/>
</dbReference>
<dbReference type="Gene3D" id="3.10.50.40">
    <property type="match status" value="1"/>
</dbReference>
<dbReference type="InterPro" id="IPR044609">
    <property type="entry name" value="FKBP2/11"/>
</dbReference>
<dbReference type="InterPro" id="IPR046357">
    <property type="entry name" value="PPIase_dom_sf"/>
</dbReference>
<dbReference type="InterPro" id="IPR001179">
    <property type="entry name" value="PPIase_FKBP_dom"/>
</dbReference>
<dbReference type="PANTHER" id="PTHR45779:SF2">
    <property type="entry name" value="PEPTIDYL-PROLYL CIS-TRANS ISOMERASE FKBP11"/>
    <property type="match status" value="1"/>
</dbReference>
<dbReference type="PANTHER" id="PTHR45779">
    <property type="entry name" value="PEPTIDYLPROLYL ISOMERASE"/>
    <property type="match status" value="1"/>
</dbReference>
<dbReference type="Pfam" id="PF00254">
    <property type="entry name" value="FKBP_C"/>
    <property type="match status" value="1"/>
</dbReference>
<dbReference type="SUPFAM" id="SSF54534">
    <property type="entry name" value="FKBP-like"/>
    <property type="match status" value="1"/>
</dbReference>
<dbReference type="PROSITE" id="PS50059">
    <property type="entry name" value="FKBP_PPIASE"/>
    <property type="match status" value="1"/>
</dbReference>
<protein>
    <recommendedName>
        <fullName>Peptidyl-prolyl cis-trans isomerase FKBP11</fullName>
        <shortName>PPIase FKBP11</shortName>
        <ecNumber>5.2.1.8</ecNumber>
    </recommendedName>
    <alternativeName>
        <fullName>19 kDa FK506-binding protein</fullName>
        <shortName>19 kDa FKBP</shortName>
        <shortName>FKBP-19</shortName>
    </alternativeName>
    <alternativeName>
        <fullName>FK506-binding protein 11</fullName>
        <shortName>FKBP-11</shortName>
    </alternativeName>
    <alternativeName>
        <fullName>Rotamase</fullName>
    </alternativeName>
</protein>
<accession>Q9D1M7</accession>
<accession>Q9CRE4</accession>
<organism>
    <name type="scientific">Mus musculus</name>
    <name type="common">Mouse</name>
    <dbReference type="NCBI Taxonomy" id="10090"/>
    <lineage>
        <taxon>Eukaryota</taxon>
        <taxon>Metazoa</taxon>
        <taxon>Chordata</taxon>
        <taxon>Craniata</taxon>
        <taxon>Vertebrata</taxon>
        <taxon>Euteleostomi</taxon>
        <taxon>Mammalia</taxon>
        <taxon>Eutheria</taxon>
        <taxon>Euarchontoglires</taxon>
        <taxon>Glires</taxon>
        <taxon>Rodentia</taxon>
        <taxon>Myomorpha</taxon>
        <taxon>Muroidea</taxon>
        <taxon>Muridae</taxon>
        <taxon>Murinae</taxon>
        <taxon>Mus</taxon>
        <taxon>Mus</taxon>
    </lineage>
</organism>
<sequence length="201" mass="22137">MTLSPLLLPLQLLLLLLFSGAVCRAEAGPETESPVRTLQVETLVQPPESCTESAAIGDTLHIHYTGSLVDGRIIDTSLTRDPLVIELGQKQVIPGLEQSLLDMCVGEKRRAVIPSHLAYGKRGYPPSIPADAVVQYDVELIALIRANYWQKLLKSILPLVGIAMVPALLGLIGYHLYRKASRPKVSKKKLKEEKRNKSKKK</sequence>
<evidence type="ECO:0000255" key="1"/>
<evidence type="ECO:0000255" key="2">
    <source>
        <dbReference type="PROSITE-ProRule" id="PRU00277"/>
    </source>
</evidence>
<evidence type="ECO:0000269" key="3">
    <source>
    </source>
</evidence>
<evidence type="ECO:0000305" key="4"/>
<reference key="1">
    <citation type="journal article" date="2005" name="Science">
        <title>The transcriptional landscape of the mammalian genome.</title>
        <authorList>
            <person name="Carninci P."/>
            <person name="Kasukawa T."/>
            <person name="Katayama S."/>
            <person name="Gough J."/>
            <person name="Frith M.C."/>
            <person name="Maeda N."/>
            <person name="Oyama R."/>
            <person name="Ravasi T."/>
            <person name="Lenhard B."/>
            <person name="Wells C."/>
            <person name="Kodzius R."/>
            <person name="Shimokawa K."/>
            <person name="Bajic V.B."/>
            <person name="Brenner S.E."/>
            <person name="Batalov S."/>
            <person name="Forrest A.R."/>
            <person name="Zavolan M."/>
            <person name="Davis M.J."/>
            <person name="Wilming L.G."/>
            <person name="Aidinis V."/>
            <person name="Allen J.E."/>
            <person name="Ambesi-Impiombato A."/>
            <person name="Apweiler R."/>
            <person name="Aturaliya R.N."/>
            <person name="Bailey T.L."/>
            <person name="Bansal M."/>
            <person name="Baxter L."/>
            <person name="Beisel K.W."/>
            <person name="Bersano T."/>
            <person name="Bono H."/>
            <person name="Chalk A.M."/>
            <person name="Chiu K.P."/>
            <person name="Choudhary V."/>
            <person name="Christoffels A."/>
            <person name="Clutterbuck D.R."/>
            <person name="Crowe M.L."/>
            <person name="Dalla E."/>
            <person name="Dalrymple B.P."/>
            <person name="de Bono B."/>
            <person name="Della Gatta G."/>
            <person name="di Bernardo D."/>
            <person name="Down T."/>
            <person name="Engstrom P."/>
            <person name="Fagiolini M."/>
            <person name="Faulkner G."/>
            <person name="Fletcher C.F."/>
            <person name="Fukushima T."/>
            <person name="Furuno M."/>
            <person name="Futaki S."/>
            <person name="Gariboldi M."/>
            <person name="Georgii-Hemming P."/>
            <person name="Gingeras T.R."/>
            <person name="Gojobori T."/>
            <person name="Green R.E."/>
            <person name="Gustincich S."/>
            <person name="Harbers M."/>
            <person name="Hayashi Y."/>
            <person name="Hensch T.K."/>
            <person name="Hirokawa N."/>
            <person name="Hill D."/>
            <person name="Huminiecki L."/>
            <person name="Iacono M."/>
            <person name="Ikeo K."/>
            <person name="Iwama A."/>
            <person name="Ishikawa T."/>
            <person name="Jakt M."/>
            <person name="Kanapin A."/>
            <person name="Katoh M."/>
            <person name="Kawasawa Y."/>
            <person name="Kelso J."/>
            <person name="Kitamura H."/>
            <person name="Kitano H."/>
            <person name="Kollias G."/>
            <person name="Krishnan S.P."/>
            <person name="Kruger A."/>
            <person name="Kummerfeld S.K."/>
            <person name="Kurochkin I.V."/>
            <person name="Lareau L.F."/>
            <person name="Lazarevic D."/>
            <person name="Lipovich L."/>
            <person name="Liu J."/>
            <person name="Liuni S."/>
            <person name="McWilliam S."/>
            <person name="Madan Babu M."/>
            <person name="Madera M."/>
            <person name="Marchionni L."/>
            <person name="Matsuda H."/>
            <person name="Matsuzawa S."/>
            <person name="Miki H."/>
            <person name="Mignone F."/>
            <person name="Miyake S."/>
            <person name="Morris K."/>
            <person name="Mottagui-Tabar S."/>
            <person name="Mulder N."/>
            <person name="Nakano N."/>
            <person name="Nakauchi H."/>
            <person name="Ng P."/>
            <person name="Nilsson R."/>
            <person name="Nishiguchi S."/>
            <person name="Nishikawa S."/>
            <person name="Nori F."/>
            <person name="Ohara O."/>
            <person name="Okazaki Y."/>
            <person name="Orlando V."/>
            <person name="Pang K.C."/>
            <person name="Pavan W.J."/>
            <person name="Pavesi G."/>
            <person name="Pesole G."/>
            <person name="Petrovsky N."/>
            <person name="Piazza S."/>
            <person name="Reed J."/>
            <person name="Reid J.F."/>
            <person name="Ring B.Z."/>
            <person name="Ringwald M."/>
            <person name="Rost B."/>
            <person name="Ruan Y."/>
            <person name="Salzberg S.L."/>
            <person name="Sandelin A."/>
            <person name="Schneider C."/>
            <person name="Schoenbach C."/>
            <person name="Sekiguchi K."/>
            <person name="Semple C.A."/>
            <person name="Seno S."/>
            <person name="Sessa L."/>
            <person name="Sheng Y."/>
            <person name="Shibata Y."/>
            <person name="Shimada H."/>
            <person name="Shimada K."/>
            <person name="Silva D."/>
            <person name="Sinclair B."/>
            <person name="Sperling S."/>
            <person name="Stupka E."/>
            <person name="Sugiura K."/>
            <person name="Sultana R."/>
            <person name="Takenaka Y."/>
            <person name="Taki K."/>
            <person name="Tammoja K."/>
            <person name="Tan S.L."/>
            <person name="Tang S."/>
            <person name="Taylor M.S."/>
            <person name="Tegner J."/>
            <person name="Teichmann S.A."/>
            <person name="Ueda H.R."/>
            <person name="van Nimwegen E."/>
            <person name="Verardo R."/>
            <person name="Wei C.L."/>
            <person name="Yagi K."/>
            <person name="Yamanishi H."/>
            <person name="Zabarovsky E."/>
            <person name="Zhu S."/>
            <person name="Zimmer A."/>
            <person name="Hide W."/>
            <person name="Bult C."/>
            <person name="Grimmond S.M."/>
            <person name="Teasdale R.D."/>
            <person name="Liu E.T."/>
            <person name="Brusic V."/>
            <person name="Quackenbush J."/>
            <person name="Wahlestedt C."/>
            <person name="Mattick J.S."/>
            <person name="Hume D.A."/>
            <person name="Kai C."/>
            <person name="Sasaki D."/>
            <person name="Tomaru Y."/>
            <person name="Fukuda S."/>
            <person name="Kanamori-Katayama M."/>
            <person name="Suzuki M."/>
            <person name="Aoki J."/>
            <person name="Arakawa T."/>
            <person name="Iida J."/>
            <person name="Imamura K."/>
            <person name="Itoh M."/>
            <person name="Kato T."/>
            <person name="Kawaji H."/>
            <person name="Kawagashira N."/>
            <person name="Kawashima T."/>
            <person name="Kojima M."/>
            <person name="Kondo S."/>
            <person name="Konno H."/>
            <person name="Nakano K."/>
            <person name="Ninomiya N."/>
            <person name="Nishio T."/>
            <person name="Okada M."/>
            <person name="Plessy C."/>
            <person name="Shibata K."/>
            <person name="Shiraki T."/>
            <person name="Suzuki S."/>
            <person name="Tagami M."/>
            <person name="Waki K."/>
            <person name="Watahiki A."/>
            <person name="Okamura-Oho Y."/>
            <person name="Suzuki H."/>
            <person name="Kawai J."/>
            <person name="Hayashizaki Y."/>
        </authorList>
    </citation>
    <scope>NUCLEOTIDE SEQUENCE [LARGE SCALE MRNA]</scope>
    <source>
        <strain>C57BL/6J</strain>
        <tissue>Embryo</tissue>
    </source>
</reference>
<reference key="2">
    <citation type="journal article" date="2004" name="Genome Res.">
        <title>The status, quality, and expansion of the NIH full-length cDNA project: the Mammalian Gene Collection (MGC).</title>
        <authorList>
            <consortium name="The MGC Project Team"/>
        </authorList>
    </citation>
    <scope>NUCLEOTIDE SEQUENCE [LARGE SCALE MRNA]</scope>
    <source>
        <strain>C57BL/6J</strain>
        <tissue>Mammary gland</tissue>
    </source>
</reference>
<reference key="3">
    <citation type="journal article" date="2010" name="Cell">
        <title>A tissue-specific atlas of mouse protein phosphorylation and expression.</title>
        <authorList>
            <person name="Huttlin E.L."/>
            <person name="Jedrychowski M.P."/>
            <person name="Elias J.E."/>
            <person name="Goswami T."/>
            <person name="Rad R."/>
            <person name="Beausoleil S.A."/>
            <person name="Villen J."/>
            <person name="Haas W."/>
            <person name="Sowa M.E."/>
            <person name="Gygi S.P."/>
        </authorList>
    </citation>
    <scope>IDENTIFICATION BY MASS SPECTROMETRY [LARGE SCALE ANALYSIS]</scope>
    <source>
        <tissue>Brown adipose tissue</tissue>
        <tissue>Heart</tissue>
        <tissue>Kidney</tissue>
        <tissue>Liver</tissue>
        <tissue>Lung</tissue>
        <tissue>Pancreas</tissue>
        <tissue>Spleen</tissue>
    </source>
</reference>
<reference key="4">
    <citation type="journal article" date="2011" name="J. Bone Miner. Metab.">
        <title>Characterization of the osteoblast-specific transmembrane protein IFITM5 and analysis of IFITM5-deficient mice.</title>
        <authorList>
            <person name="Hanagata N."/>
            <person name="Li X."/>
            <person name="Morita H."/>
            <person name="Takemura T."/>
            <person name="Li J."/>
            <person name="Minowa T."/>
        </authorList>
    </citation>
    <scope>INTERACTION WITH IFITM5</scope>
</reference>
<name>FKB11_MOUSE</name>